<sequence length="10061" mass="1187585">MDCNFFEEDGSSSMNQTNGISKENVSEKVYSEDDKNTSCYVSYSSHSDDSYLDVEYENVHKSRDIENHINDNNKNMDNYNLGYCNFNDVMIDKNIECINKKELNCLKLKKNILNRSENYNNDIVSTEYSDNHTLYKNCSGTDDKNYSNNKDDKISDDHKCDKFVDDMDNNPNNHVSNNGDPKKCENLSPDNDTSNSIHKNNNTNINEKKNGEKKFIEGHFLSVINKFKRSLKENVIGKKIWNNNNSDITTIEPHTLQNEDSITDNNKSNKKSDNNNDKKNDDDNNNNNNNNNNNNNNNNNNDNHVCTSNNQPNTINKQNNLPSHKINDQNGRTKITPQNVNQKEKEIKNVVKEKNNFNREEKDITNSDDYDENSTDESCSYNPNITSSENSEEDCYEPSSDDKPSNNTSDHININDIRNDVPSNDNASSLNVKSAENCNKEKKKKKKKKKKELNNDNKDNTLNNETMNDINMNNKNDNTCFTIQESNKNCKNENFLILGNENEMKTSRINVPKIEIIKDEEPNRFFDNNDLKNKNINDHDNDNDDIDFIKMIKDKMKKSIYNNKDNKCISKKSNINKIENPVNNNNNNNNNNNNDINIFSNLSEQNILKKESNVCESYEGRKESNNTIHKIHCSKGKKNIMNLNNSSNTSSNFLSQHTLDDINKKYNVLSDVNLLKLIAHCSKSKNGEFPSMDDKIIEDFINMKKNSIKNEIKKHIIYICAKCRLEMKLSNNPYLCFECFINEMNAHTGKTVRMANGTDFNIKDVKVINSYISKFFVEVDKLKNKFEMDDEEIMLMFSEMRKSTLWNSEKNMCKLFFDIFKNYDIIDNNSIFSSNNKTRTDFLKQNYDIKIEEWNQNEDEKRLINNIINNEILSPGYIKELLKFYNFSKMKMKPKTNEQIEEIYLKPKSKKVNHYKNIRKKKYTVHKDICKIRTVCNSTCRINSCNYCSCIFDSIKCRFILISKMKNTKKLVYEKRINNSTISVEKMHEVKEIKIEQKDIFIHDDQKNSKDVPPSYNFGNSPIPNEEKPNVNKEGNIRIRNAINIFNKNKNNNNNNNDKNDKNDKNDKNDKNDKNDGKNNNKGNDKNNNRGNDKNNDKKNNRDNDKNNDKNNDKKNNKDNNNKKKKNGKEQNEDSTESDDESSVIDDNYIDDDSCDCDSESDSIDYDTSFNSESNYDDNSFIDMSDNDNTLNYIKNYETTYNALDIFMKDIDKINKNREELNNILPIKKSLDNYVLPNIITQKVLPPVILPLNKQMTNLFYELRYRDFFHIEKIDYYKLFTMQKGISNIYMKKFLMNNEDMSFNSITNGIETYNYTNENIVINHKNNNGKIELYIPNFWRSIKSVNEIKSLTGNYYDFYYKVLVHPRGNSNDDNYMSAYLEVIKQDFYPSEWVFPNVHFQLTVHNFKNRKNSISSASCWSFTNNSLSRGWQKMISHSKINKVSGFLDESGGLLIKGKVEITFKQLWSKSVQYSPKYIWSYMPEKLYAHFQQEDPLLNFLFKKSYFKNILHKNEKHNNYNSSINDLKKNDNNKSNNYYINKNSNCDKNKNIDRMKKMSYYNMNYLYNRYTLDIYNYSLYWSPQLVKSYFGNVDHKKKCNKSLANNTNNVIQNDMNKEEKVLDIISDSYSNMHVYDLLIKRKNLNELKKFSKGGNLQNEQKGDEDVKKEDVKKENVNKEEIKNGNNNNNNDENENEVDDNTVSTTDYLTLDDRKHVLTLTNYIVPIVESFHDNDNLTILVNTLYNIDLFKIIVLKYNGNLYNRILMKYIKKKRKEKRYKLEYVMKKYGIEKHFTKNEVIQKIKEYNENKIDNYDDCIKWKNTLIQKLQIISERIKYLYTYMNDKINNMNNINYKSYFQLCNSNEIPNIQFINVIDIQKEEIIINGITRINNYINYLNVWIQNVNDCINYVTNCGYNFNYLSNLNKVKININDLNNNIVDVNNSIHNIEKEDIFKSLSYPKDHSTTFEGIHNNMSHKETSSIQNKGKEKSNNNIKSDDNNNNNDNYCVGDYLEFLEYDFIDNPDELKRIPYRYSSDFKSFHMFEYFRKNNNNVIVSLQRIFICMQLYSLVLCAKKKKDHFEKYTSDVNLNELYYNEKDNFHDNMNKFKGKNNKYNKKQEYYNQNNYDCGVKNSYSSSLSTAVETLTANGIKEAKDDDLNKSSLNKKKCHDKDNNDQPHYVSTNSSNSDDDDDDGDNNNNKNDNMDDDSYYERNSIFGDNNDDKDDDDDDSYLDNFSDSDGKKNDPSYKYDIENNEEMKFYKDLELRKKNCLYYYRNALFYNGSSMIPCEENKHFTIPLKGIDNNGANPENFDDGTENMCSFLNMFSKNDNYLNLFKPLIPNIKILLFSLNKILFNKHRCNEPIRKIHEELFKRIVCDVARDKIKLNRKIKKLKKQNNKGDIINDLINDLKELRFFEKICYELFKLKSKNYSDDEDSNNRMEESEYSENSNDLSYDEFDSKISKYPTKVGNEGKKSKDNNNNNNNNMMGDDDNKVNKNEEGNEQNESAQIKEGKEKKLRDFIQKEDIRNEDNESYEYYNDQGTENLDDMNSDEYMNNNNNNNNNNNNNIKRLDDSYNKLLKNKNINSLIYNLVSKLKMDFYKNYIICDKDIFKTIGRLCFSEIPYVLFLYMDCYKSLGRGDLVDIPLYLDVFEENEEMEDDSKGEKNLVYSIRRNNMRNKGDGSSKEKITYHLYALVISQNKNPNNNLFIPSYNKVNDMEFNIGNDCNLNSSSYLILKPQINGPWYQIYKNRITQLKQATDFNEWKCHRDFYCSCCIYVSDNYFEMQNHFFLQQFNIKDINFPLYVHTLKEFEIEEEDIFEFDRNNKNDDMYSSSVNNGLEENYVDELIYELRKFSLDKSEKKLNEQKDGNGVPKSSNDKLVSYIEEEKYSSHFKKVFEKNNLYKLVDDINEKYNVKYYGSSKTKIFSKKKNVPMNIKEGTFPYIKTEHDIIYNCLQAHHRLMINVKEELIDDVIKVNNNNNICYNFNNHHKSAVCIVLNNHNTLREDKRRHFFDLKNIIKNYEKFDMNNLNIYNSNIKLMKFSDNFSTGLIITKNMPLFYSNITLKNIINVRNNSIIDSDNERKHLIHKIGEDHHHNNNSNNNVEGNISKVYCKKELKGIISSNETNDTNHTNRTNRTNEMKEENGLSDIRNYEQNDNITTTNTNDKKLDVVDNISETNDLNLIRKNGDINKCIEKGNGGGKGRLNVMNNNIQKCKNKYNTKKECRNLNILHCNTNNIIINRNDMNYVKYIMQLENFLKGMNFNNKFFFNMNNVKDPIRDPFHLEINNVFYNFFEVKMNMNNIKKNYINNQEKSELHSYYIKTCLNIFKSFFHEYFYLSFINKMEIKKKKKNAFKNFCIALSDIFFTNLSFKSEEDDDNFEHLQGGIIIYEFYEKRFKKLKLILKKIFMYLNIICMIIKYIKLKKWIFNENFDMHTCKMHDTFFFNFLYFFYNKYSKNCKNNYIKKLCQKSAVKKKQIINGIKKNMNTVKDEDFYFLEFYDKLFVKREPLMQEHLSNKLDKLLTYCTCIISTNETQIINPKIYKKKKALFFERTQHNIDCVFRYFSSSLHDEILYLSKRRNDFNERKKYKEQDKIASEKEDQIYSIHGNNMNNQDRMYLYIEENFNSIEETNPKRMEYFLLNLLKNNEKKRKTCVLCYCVRRYYMNFLNKLEKKLTHDFIEKQINFIFDNNYLEITKLYRRTKNNLLDPNCNCPSLFNYINIDTVEACIIYLLQTMWKFYISYILSIPNELEQYYENLAKKHKRKKYKNSKDEKGWNFIKFLKEEKTNNLINKYISFNDDSDVISTNDEENVDRSDDSESNDDKKYSKKKQSNLLLSNFDFVDISSIEKLTSGNSSSKNSKKNSNNESIQMDNTNNSNSNNNNKNDNNNDNNNDNNNSFCYYCADELNVKNGKILDTNKNIESNDKSYKNQNIQSNEQSVTPNRNIEENKDHEKKSNNSFYNINLDILKQDDLFYKCTNEHLGNATAVLNILQKKLENEELKKLMKLFHFRGFTEKIPNEECSKKKCIKNKNVHKNKDDVIVSAHKEKNVKTDSSDDKKKKEDNENNNKNKNNIIHNSTNNNVLKENIHNITQNEYIKNDLKNILSKDNLRNEDPSDILENNLESVFNGTHVDQKFISNFYANLKIFKDCLDKNELTKGNNSKDNNNNNNNNNNNNNNKNNMGQENVLMSTIHKVNETMKKYNINNINEIKSVLIKNGYDIRKCYNGIDLIFLFLSKIKGANVNFINGNNFESNKNMYEILLSNFKSLNYEKIEKEYYSLDYILGNFEYIDENYIEERYASFFNYMDVIFTTQNMIDDSDIITQDIFNPFIDIMNNLFCYGIGLIDNNNNMNSSSNNNNKINSNNSHSNNKNNNNKNKNNNNSNNNNNNNNSNNNSNNNNSNNNNNNNNNNNNNNNNVNKEIIKLNSLYSFLDNLHKCVGSLLIIDKSYDCKKELFSFIQYNSFFWYILYKQYNMFLTYYDMTNHCNFFNIFLFHFFNYTFNFPMDNFFQLDNKLSFEKEQIVNHLFTKFPFLKEEEKSLFHIIMRFLLQEKNHFYNYYYSNELSLFIFNAIMSLNNFYLNMKEPNIFSKDYTKLNDYNFVLNMKEVYDIQPAVINKKSKCEESSNKIYNVCKSSNNNEEIKSVENDKNGGNSYFDNFILNKENILDILEKKNEKEIYEIGKVFDFHIKNESIYFKKRINMLDFVMNDYKKENFVNYSNSDINNKIFYVAYNYPIININNKNNDLFSIYLRTIYKCNEHFRNLNHVFFIYSNYFYNFHNLFLFFNKDNDLFNSLFKLRFKIDQAKQMDNFYYDMEDKNNNTYMNKEYVQIKKKNENENNITFSNPIGNYKNYEYAIHNSKSDIFYIFDDIVYDITESVNMDYYFKGNRAYVNFVKNKMYGDDNKEDDYIQYDEISINEANQNKRKQQIDSSNNNNNVVVNNDDNDNDNMCSNNNYYYNNIYNNDNLCYNRNSIQFDDYMDETILSELINNKETDGLNADSSNLGPYNMNNVKNKNNNNNNSNNKRKKNEKNEKIDKIEQFLHESELEKDIMNITFNEKEFLGKDLSFNFYFRSIMYYNKDIIASNNLEYLMKDKNFITGNVGKKYFFISLLFNIDYYNVRGMNIGNKVVSNRTMFINKILRDNKGKVLNLKVFHIYNIFSKIIELYYERKRKGHNMMSLKNSKIASTNGNNNNNNNNNNNNNNNNSKSNLKDEDNTINLFDYKTDEDFYYKVKMNPSYFFLLYAIKKDYDKRNKNKLIFMNVNSDLEAYIEDKKDNNIYNRFDLNILLVPISSQIVLSKFNGNLNMFNDNDYPLITFKYLTSTYELICIGIILCSSKLLLQDYILNWFFPKLKERRLVKDDVDLKIDDIYVYEESELYCLEKIRKVSCNIKKLLKKYSNTIVIQLKKTNMNNSNIDKINLKCVEYSKLNKYNFCSKCRNNYICICEKIEREQLRKKVSLIKQEEQLYRYFKIYNNNMNMNNNNSNNNNNNNNDDLLNMLNNDKEAKKILVLMEKMKDLKKAQNIKAQEKKINKNINSTNTQNVENDNNKKLESKKEKEKLLFNIYETPNFVQELEAIENSCRSSNSSMLSLSSDNISSYSSDDNLFVDEIDSGSYTFNNIVIPNMVSVKDEENETQEKTNSSDLKKSQKVNIIKKGNGVKNDMEDIMLKEFHKLSKQRISNIYNLQQSVQLSQENVNNNNMVLNFIKAQENMKNKNMIKDAKKDSKKIPVDVLKDKKGKTSNKEELEKEKEKEEHKLKEQQTVQEDQKVKDNKKIKDNQKVKDNKKIKDNQKVKDNKKIKQDNIEKTKNDKEEPIQINENTKQSNIKIVSLTKSQESLTDNKKTNADNEKQLTVNKIVPKIENKKTEPAVDVKGKVEKSKLSKDKSVIVPEVKKEIINNSVIMNNDGSNNENKNKENKNKSSEKSKAKDNNNNKKDNNNNNNNKKDNNNNNNKKDNNNSNNNNNNNNLSNNGEEDPNDSDSDKDKKKKNKKKDNKNINDDSDDNNKNKKKLKNNIKNSDDIINNYFSKNVIEYIEKNDKLENIATYIYNELIEITKKKIKKNVIRLDNLSADNYLTIGEEFLNVMKEILLKIYYKYNEDDYRKHYLRMNNNENDNNNNNKISLKKKSETEASNKNVESNDNVDGKLENEYNEDETYMNKFNLCDDEHVIKFLNLIKRKLIYKILFPDIQIDTKSKGRNKKNVKKKKQVDIKYVYDIFKREYIFYDKILIMIQHILDINIRTNIFLFVYLFAGKLISFVDFDYILNNTIFYNDYVYYNKVAFEDTFFQEESLEESNKKYYNMNDSINMPLPDSPTTTSNSNNNNNNNNSNNNNNNNNYDKGEVKGLRTSSEQLLNSLNNEGNNNKLKEDNVMINEENNVNEDIEKKKKKKSIEEEGSGDDVLINVNMSKIIYILILISNKRIMKELIEEKYREELNEYYYFEMNKKYYDILCNEYNKILNENYAKDLSEHYVKDELFFESLNIIELLNNKEYISTLTDTNKYIKDENKKLNKTHVDDNELIINEYEFMNEKNINKYINIHNIIKFKLNFKIAIKKINILQDKIFINNNDNISSGISFYSLIFKYNSNLINTLHTDIMKTTQNNNMSIPNMTNYNNYLQVSKKDIDKLKGIYNKYVVLNNKPNVLKDMYILNSEINTLLSVLYNDINYNNMMNNTYNNILGDTHISAQNGGYLRAGSNNLSNNKMNNQGGNHINVKRVLTNNLNMNNMNNNNNNNNNNNNNNNNNNNNNNNNNNNNNNNNNNNNIYINEGGTINMKDLKLNLSKVIGTNPDIQNEINNNSNHDKKSILKNSSTYSSIYDNNTPTIINKNNNNLKTSVGLNSPTSNRNKKSVTTFDSKVTLSASYNSNEINNMNEDSKLRRLSDQPLSAKSSKIVTPPGNNMNNNTNNVINNTNNVPNNTNNIINNNVATNKYIKKSKFKRVYNKDIPYICNEGKTWMVIYKPAYYHCSAYTSHNRYNFLVNINKYSDYFYNILEKICMKCKIKTKFMCITCKDMENICSKCENIVSKFCKKCNLLIKKNRDVLKIINSISLNDVVFSGRVESFHLFMMKSFPHLETVKKWHKLECGLCHRIDLETSGSLIIAKTKEAREFLFDQFRKRNVYKEYILLCHGRIKKKKGFINKSIQTHEYNNFHSKSHFSLVVKTGGTDAYTEYNCVKVYKLKRKIEDIIQEVQDGKYNCNSTVKKDINKEIYCNDYYKFLNNNKKNVNIIQRYVIITNILSNHDNITKKKDTSNNLMTQEDYSSFVQRKNSHIITNYFSDSQILEDKKKIKKKISSTHNNKTLNIKGINHILHDDTHYNLNGNINSRGSYINKNDFTNNMNNNMNNMNNMNTSTLGIYTSGAPSIKKEVCHHLCFRCNSISEDYFLTDPKEIENYTKEFTLCNVKIHTGRTHQIRVHMRHIGHPLVSDKKYLNPSLSNLDKFWCFRMFLHSLILEFNNPDYYFFNLNDDMKKKKKMYSSNLYRMPDRTVKAICPLAGDLQTVLDNELEISESLEDENSYINRILKMNINDKRNEAMKNARPIIEDDKFVKHASMDSSKIIHSAREETNDKEKISTQAKIIEVGKKLTTKDEDMLHSKKTDVIQHGDEEEDDEEDDEEDDEEDEEEEEEDEDEEDVEDVEDIEDVEDVEDIEDNYVDDDQYEDNYDDDNDNDDDDEYDHDYDEHINEEEQEDDDKKNNVNINDSYEEGEEEGDGKLNTKIKKDKKSTENNISVVEEKVKSIDINKEEDFPDLLSNSKKKNHKDKRNASKNKNKNKDILKKNENNINDEKEKKSSNVITKNNKEQNEIIDNKNEHVDNKNEIIDNKNEIIVNKNEIIVNKNEIIVNKNEIIDNKNEHIDNKNLLNGSLDEYNNFKEKNLLSKENLKINDTTTITTSVEIPNDEHIKKILLKKPTNKILRKLNYDDFFTNKKKKDMNKENMKKTDEQKIKEEIKQTQDEEDTYLDLIDNEIKKRLRTNFNLLVKEAKIVINNIIRNSFVFKILFYFFKLKKTLLYLLKCFGIEQIKKEKKVYVEMNILDEFVNNMNENKENMPIDFLYELIHSITYFYKNMHVKKTRKKKEIIIYTLKKHLKNIKSNSNISKTKRSLIFQRFYNILFNLNYALNKYGLKTNENLKNQIMKKSKNVYLKITNVFTIIMNILNSKVYMKDIHIKKLMENKAVFSLNTIEQFLLLHKINNETGGEGTNNDKEKKRQTKVSNTQGYNKDNINNKEKETNKNEEQQQGEAEGKREGEGEEGEGGEEEECNYLIEQINKIFFKVDKNNEHMLNGVLLENDDDYLDEEGKVSKKKMKKKKLLNDKEHEKDNEDNDEDNDEDDDDEDDDEDDEDDDDDDDDDDDDDDDDDYDEDYDEDYDEKLVENKKNERSNIIMSKENMNKLNMQPKNTNNRSSSSNTIDMKKKIYEKNCMKEKEYRTHDLITNESIMYKNNEIYDKEKYRRNQENINHMSSNYMDKNINHHHEYDNMKKKNYSNNNIYNNNSSNKVSMDEEKRKNLDNNTYPYPMYENVKEIEKNKVQQNLFHISKENNNNNNDSTNNNSVYDYNMSNSNYGSKMGSNNINDSTNYYNMREKNIYNILCNNDSNNYVLFNSNEKYSMNNKISNSILSNMIMNKQDNNNININQNNNNNNNNNMNEGGSETLYSSFTKEIEKLKKEVRKCEESYDKEMVEIQNTKKEIKYLRENNKNDELNNIFSELNLENISKYLLSAYEKYGLNVFIKVLVYKNDLGHINDHIKKQDDVNMEFFINISVDKIFDYLLLKKNIITMVNIKKLKEKFIQGQKIYELVKNETNKMIIENIKEYNFIFILWKHNNMNDLYERKQVIFNFIIKIIDKIIPKYIINEYIIIRKNEIYEIMINSLNKKNEYEKKNKDISSSQYLEKENTYNNLYKKIKDEKRIVDNYSIEMHAEKNITNPIYMSQREDNSTPNSKKNCSNTNHIMSINHSNMNNTKNTNNHNNNNNNNNYVVNHTTHSTSFYYLHNEKPSNVNTDNQKEIKDDNVHMKFQSLPENIRIGVFKNDVNKFYEIYKMMNAGNDLNSLMYKNSGHIKNKVNNEPYSNNYKRNTFCTNDINFAASAQQSFMNKNVINSMNNNMVSSNNMISSNNIISNNNMISSNNMISSNNMINSNNMISSNNMISNNMMNNKMNSSNVQIDTEKTRTMNNLQDQFLNLQKNGSHIYLRNTKDSKNSDIFTFKNNVRSPSQHITLNEGKENGIDMKKKIEQEEDKKKIINNNNNNINSNNNINSNNNINSNNNMNDEDLIKKEINMNTNDYEENEKRSSQNKTNYFDNIINNSYINNKMNNFMIEKKEELNNDMINTFTNKREINIQTEKAKEQNIKEPYEVKETNHNKGIIHMYYDNEKDINNITSASGNRHNNIERDKNNIQTNKTSNNFVKSFKNTISEMFYKKKLNKNTEIKDEPNQNNDTMIYNNLQDMSKKVDEYNENKNYNHNIVHNNALKSNQMDNEEKKKIELPHNNNNNNNNSNERKDLLNNPMSVNMQNAQNVQNTNRSHEYLINSNISLPNFVDENTCSNLKEKQFESFEKNQMDMTNPNMMMFNIMLGNNLDGIIPNYMEEKHNKNMNKNVNNKNSVSLSSSMINNGNVINNRMHTKTINNNSNTCVPNIKYPNFFINKNNIPYTNENNKSLSESNLMNLVCELNNIEKVENLSMQNNLNNNINNKRSTLSQMNLLNMENTKGNEQHMRTDLHHNINNNIFLSNNLCDNKIVNQMFLKKYYNSNFVHYDEENEEKNKLGTIPRHNTTTTNNNNNDNNNNSNNNMHLFYNFNGNTPSDINNSYCQQKKIMSSSIIMNNKENNNLHFLNNTYDINGSYATSSIINNNMNRNNSNSVNSNYLNKTFSIMDPRNNINEYEEKQKIIINRIKQQNISNTSGNMKNSSNIRSSSNIRSSNNIKSSSNIKSSSNINANNNILYQLIDENILKNTLSNNNPFNEIKNNTQKTNMDFGLNQLSMYMQNNVTSNLKNNSITNETHNNNDNMKTNHNNNNNNNNNNNNNNNNNTSGYPINYLIFQQNQNHSDTNNNNNNNNKNNSNNNNNNIY</sequence>
<accession>Q8I3Z1</accession>
<organism>
    <name type="scientific">Plasmodium falciparum (isolate 3D7)</name>
    <dbReference type="NCBI Taxonomy" id="36329"/>
    <lineage>
        <taxon>Eukaryota</taxon>
        <taxon>Sar</taxon>
        <taxon>Alveolata</taxon>
        <taxon>Apicomplexa</taxon>
        <taxon>Aconoidasida</taxon>
        <taxon>Haemosporida</taxon>
        <taxon>Plasmodiidae</taxon>
        <taxon>Plasmodium</taxon>
        <taxon>Plasmodium (Laverania)</taxon>
    </lineage>
</organism>
<keyword id="KW-0175">Coiled coil</keyword>
<keyword id="KW-0472">Membrane</keyword>
<keyword id="KW-0477">Merozoite</keyword>
<keyword id="KW-1185">Reference proteome</keyword>
<keyword id="KW-0812">Transmembrane</keyword>
<keyword id="KW-1133">Transmembrane helix</keyword>
<reference key="1">
    <citation type="journal article" date="2002" name="Nature">
        <title>Genome sequence of the human malaria parasite Plasmodium falciparum.</title>
        <authorList>
            <person name="Gardner M.J."/>
            <person name="Hall N."/>
            <person name="Fung E."/>
            <person name="White O."/>
            <person name="Berriman M."/>
            <person name="Hyman R.W."/>
            <person name="Carlton J.M."/>
            <person name="Pain A."/>
            <person name="Nelson K.E."/>
            <person name="Bowman S."/>
            <person name="Paulsen I.T."/>
            <person name="James K.D."/>
            <person name="Eisen J.A."/>
            <person name="Rutherford K.M."/>
            <person name="Salzberg S.L."/>
            <person name="Craig A."/>
            <person name="Kyes S."/>
            <person name="Chan M.-S."/>
            <person name="Nene V."/>
            <person name="Shallom S.J."/>
            <person name="Suh B."/>
            <person name="Peterson J."/>
            <person name="Angiuoli S."/>
            <person name="Pertea M."/>
            <person name="Allen J."/>
            <person name="Selengut J."/>
            <person name="Haft D."/>
            <person name="Mather M.W."/>
            <person name="Vaidya A.B."/>
            <person name="Martin D.M.A."/>
            <person name="Fairlamb A.H."/>
            <person name="Fraunholz M.J."/>
            <person name="Roos D.S."/>
            <person name="Ralph S.A."/>
            <person name="McFadden G.I."/>
            <person name="Cummings L.M."/>
            <person name="Subramanian G.M."/>
            <person name="Mungall C."/>
            <person name="Venter J.C."/>
            <person name="Carucci D.J."/>
            <person name="Hoffman S.L."/>
            <person name="Newbold C."/>
            <person name="Davis R.W."/>
            <person name="Fraser C.M."/>
            <person name="Barrell B.G."/>
        </authorList>
    </citation>
    <scope>NUCLEOTIDE SEQUENCE [LARGE SCALE GENOMIC DNA]</scope>
    <source>
        <strain>3D7</strain>
    </source>
</reference>
<reference evidence="6" key="2">
    <citation type="journal article" date="2002" name="Nature">
        <title>Sequence of Plasmodium falciparum chromosomes 1, 3-9 and 13.</title>
        <authorList>
            <person name="Hall N."/>
            <person name="Pain A."/>
            <person name="Berriman M."/>
            <person name="Churcher C.M."/>
            <person name="Harris B."/>
            <person name="Harris D."/>
            <person name="Mungall K.L."/>
            <person name="Bowman S."/>
            <person name="Atkin R."/>
            <person name="Baker S."/>
            <person name="Barron A."/>
            <person name="Brooks K."/>
            <person name="Buckee C.O."/>
            <person name="Burrows C."/>
            <person name="Cherevach I."/>
            <person name="Chillingworth C."/>
            <person name="Chillingworth T."/>
            <person name="Christodoulou Z."/>
            <person name="Clark L."/>
            <person name="Clark R."/>
            <person name="Corton C."/>
            <person name="Cronin A."/>
            <person name="Davies R.M."/>
            <person name="Davis P."/>
            <person name="Dear P."/>
            <person name="Dearden F."/>
            <person name="Doggett J."/>
            <person name="Feltwell T."/>
            <person name="Goble A."/>
            <person name="Goodhead I."/>
            <person name="Gwilliam R."/>
            <person name="Hamlin N."/>
            <person name="Hance Z."/>
            <person name="Harper D."/>
            <person name="Hauser H."/>
            <person name="Hornsby T."/>
            <person name="Holroyd S."/>
            <person name="Horrocks P."/>
            <person name="Humphray S."/>
            <person name="Jagels K."/>
            <person name="James K.D."/>
            <person name="Johnson D."/>
            <person name="Kerhornou A."/>
            <person name="Knights A."/>
            <person name="Konfortov B."/>
            <person name="Kyes S."/>
            <person name="Larke N."/>
            <person name="Lawson D."/>
            <person name="Lennard N."/>
            <person name="Line A."/>
            <person name="Maddison M."/>
            <person name="Mclean J."/>
            <person name="Mooney P."/>
            <person name="Moule S."/>
            <person name="Murphy L."/>
            <person name="Oliver K."/>
            <person name="Ormond D."/>
            <person name="Price C."/>
            <person name="Quail M.A."/>
            <person name="Rabbinowitsch E."/>
            <person name="Rajandream M.A."/>
            <person name="Rutter S."/>
            <person name="Rutherford K.M."/>
            <person name="Sanders M."/>
            <person name="Simmonds M."/>
            <person name="Seeger K."/>
            <person name="Sharp S."/>
            <person name="Smith R."/>
            <person name="Squares R."/>
            <person name="Squares S."/>
            <person name="Stevens K."/>
            <person name="Taylor K."/>
            <person name="Tivey A."/>
            <person name="Unwin L."/>
            <person name="Whitehead S."/>
            <person name="Woodward J.R."/>
            <person name="Sulston J.E."/>
            <person name="Craig A."/>
            <person name="Newbold C."/>
            <person name="Barrell B.G."/>
        </authorList>
    </citation>
    <scope>NUCLEOTIDE SEQUENCE [LARGE SCALE GENOMIC DNA]</scope>
    <source>
        <strain>3D7</strain>
    </source>
</reference>
<reference evidence="5" key="3">
    <citation type="journal article" date="2007" name="PLoS ONE">
        <title>Rapid identification of malaria vaccine candidates based on alpha-helical coiled coil protein motif.</title>
        <authorList>
            <person name="Villard V."/>
            <person name="Agak G.W."/>
            <person name="Frank G."/>
            <person name="Jafarshad A."/>
            <person name="Servis C."/>
            <person name="Nebie I."/>
            <person name="Sirima S.B."/>
            <person name="Felger I."/>
            <person name="Arevalo-Herrera M."/>
            <person name="Herrera S."/>
            <person name="Heitz F."/>
            <person name="Baecker V."/>
            <person name="Druilhe P."/>
            <person name="Kajava A.V."/>
            <person name="Corradin G."/>
        </authorList>
    </citation>
    <scope>SYNTHESIS OF 1920-1946</scope>
    <scope>DEVELOPMENTAL STAGE</scope>
    <scope>POSSIBLE CANDIDATE MALARIA EPITOPE</scope>
</reference>
<gene>
    <name type="ORF">PFE0570w</name>
</gene>
<evidence type="ECO:0000255" key="1"/>
<evidence type="ECO:0000255" key="2">
    <source>
        <dbReference type="PROSITE-ProRule" id="PRU00129"/>
    </source>
</evidence>
<evidence type="ECO:0000256" key="3">
    <source>
        <dbReference type="SAM" id="MobiDB-lite"/>
    </source>
</evidence>
<evidence type="ECO:0000269" key="4">
    <source>
    </source>
</evidence>
<evidence type="ECO:0000305" key="5"/>
<evidence type="ECO:0000312" key="6">
    <source>
        <dbReference type="EMBL" id="CAD51479.1"/>
    </source>
</evidence>
<protein>
    <recommendedName>
        <fullName>MATH and LRR domain-containing protein PFE0570w</fullName>
    </recommendedName>
</protein>
<comment type="subcellular location">
    <subcellularLocation>
        <location evidence="5">Membrane</location>
        <topology evidence="5">Single-pass membrane protein</topology>
    </subcellularLocation>
</comment>
<comment type="developmental stage">
    <text evidence="4">Expressed during the asexual cell-cycle on the cell surface of the host erythrocytes.</text>
</comment>
<comment type="biotechnology">
    <text evidence="4">Possible candidate for an effective malaria vaccine as determined by epitope response in sera.</text>
</comment>
<feature type="chain" id="PRO_0000356830" description="MATH and LRR domain-containing protein PFE0570w">
    <location>
        <begin position="1"/>
        <end position="10061"/>
    </location>
</feature>
<feature type="transmembrane region" description="Helical" evidence="1">
    <location>
        <begin position="3398"/>
        <end position="3418"/>
    </location>
</feature>
<feature type="domain" description="MATH" evidence="2">
    <location>
        <begin position="1328"/>
        <end position="1458"/>
    </location>
</feature>
<feature type="region of interest" description="Disordered" evidence="3">
    <location>
        <begin position="166"/>
        <end position="210"/>
    </location>
</feature>
<feature type="region of interest" description="Disordered" evidence="3">
    <location>
        <begin position="244"/>
        <end position="471"/>
    </location>
</feature>
<feature type="region of interest" description="Disordered" evidence="3">
    <location>
        <begin position="1004"/>
        <end position="1170"/>
    </location>
</feature>
<feature type="region of interest" description="Disordered" evidence="3">
    <location>
        <begin position="1651"/>
        <end position="1698"/>
    </location>
</feature>
<feature type="region of interest" description="Disordered" evidence="3">
    <location>
        <begin position="1973"/>
        <end position="1998"/>
    </location>
</feature>
<feature type="region of interest" description="Disordered" evidence="3">
    <location>
        <begin position="2155"/>
        <end position="2245"/>
    </location>
</feature>
<feature type="region of interest" description="Disordered" evidence="3">
    <location>
        <begin position="2427"/>
        <end position="2566"/>
    </location>
</feature>
<feature type="region of interest" description="Disordered" evidence="3">
    <location>
        <begin position="3120"/>
        <end position="3139"/>
    </location>
</feature>
<feature type="region of interest" description="Disordered" evidence="3">
    <location>
        <begin position="3802"/>
        <end position="3826"/>
    </location>
</feature>
<feature type="region of interest" description="Disordered" evidence="3">
    <location>
        <begin position="3847"/>
        <end position="3890"/>
    </location>
</feature>
<feature type="region of interest" description="Disordered" evidence="3">
    <location>
        <begin position="3919"/>
        <end position="3953"/>
    </location>
</feature>
<feature type="region of interest" description="Disordered" evidence="3">
    <location>
        <begin position="4039"/>
        <end position="4074"/>
    </location>
</feature>
<feature type="region of interest" description="Disordered" evidence="3">
    <location>
        <begin position="4155"/>
        <end position="4180"/>
    </location>
</feature>
<feature type="region of interest" description="Disordered" evidence="3">
    <location>
        <begin position="4352"/>
        <end position="4414"/>
    </location>
</feature>
<feature type="region of interest" description="Disordered" evidence="3">
    <location>
        <begin position="4919"/>
        <end position="4943"/>
    </location>
</feature>
<feature type="region of interest" description="Disordered" evidence="3">
    <location>
        <begin position="4991"/>
        <end position="5030"/>
    </location>
</feature>
<feature type="region of interest" description="Disordered" evidence="3">
    <location>
        <begin position="5179"/>
        <end position="5207"/>
    </location>
</feature>
<feature type="region of interest" description="Disordered" evidence="3">
    <location>
        <begin position="5716"/>
        <end position="5816"/>
    </location>
</feature>
<feature type="region of interest" description="Disordered" evidence="3">
    <location>
        <begin position="5892"/>
        <end position="6009"/>
    </location>
</feature>
<feature type="region of interest" description="Disordered" evidence="3">
    <location>
        <begin position="6123"/>
        <end position="6142"/>
    </location>
</feature>
<feature type="region of interest" description="Disordered" evidence="3">
    <location>
        <begin position="6299"/>
        <end position="6338"/>
    </location>
</feature>
<feature type="region of interest" description="Disordered" evidence="3">
    <location>
        <begin position="6722"/>
        <end position="6760"/>
    </location>
</feature>
<feature type="region of interest" description="Disordered" evidence="3">
    <location>
        <begin position="7585"/>
        <end position="7730"/>
    </location>
</feature>
<feature type="region of interest" description="Disordered" evidence="3">
    <location>
        <begin position="7744"/>
        <end position="7787"/>
    </location>
</feature>
<feature type="region of interest" description="Disordered" evidence="3">
    <location>
        <begin position="8189"/>
        <end position="8252"/>
    </location>
</feature>
<feature type="region of interest" description="Disordered" evidence="3">
    <location>
        <begin position="8293"/>
        <end position="8380"/>
    </location>
</feature>
<feature type="region of interest" description="Disordered" evidence="3">
    <location>
        <begin position="8474"/>
        <end position="8497"/>
    </location>
</feature>
<feature type="region of interest" description="Disordered" evidence="3">
    <location>
        <begin position="9759"/>
        <end position="9779"/>
    </location>
</feature>
<feature type="region of interest" description="Disordered" evidence="3">
    <location>
        <begin position="9891"/>
        <end position="9926"/>
    </location>
</feature>
<feature type="region of interest" description="Disordered" evidence="3">
    <location>
        <begin position="9985"/>
        <end position="10061"/>
    </location>
</feature>
<feature type="coiled-coil region" evidence="1">
    <location>
        <begin position="338"/>
        <end position="366"/>
    </location>
</feature>
<feature type="coiled-coil region" evidence="1">
    <location>
        <begin position="431"/>
        <end position="469"/>
    </location>
</feature>
<feature type="coiled-coil region" evidence="1">
    <location>
        <begin position="1916"/>
        <end position="1948"/>
    </location>
</feature>
<feature type="coiled-coil region" evidence="1">
    <location>
        <begin position="2555"/>
        <end position="2580"/>
    </location>
</feature>
<feature type="coiled-coil region" evidence="1">
    <location>
        <begin position="3977"/>
        <end position="4001"/>
    </location>
</feature>
<feature type="coiled-coil region" evidence="1">
    <location>
        <begin position="4399"/>
        <end position="4424"/>
    </location>
</feature>
<feature type="coiled-coil region" evidence="1">
    <location>
        <begin position="5006"/>
        <end position="5046"/>
    </location>
</feature>
<feature type="coiled-coil region" evidence="1">
    <location>
        <begin position="5486"/>
        <end position="5563"/>
    </location>
</feature>
<feature type="coiled-coil region" evidence="1">
    <location>
        <begin position="5728"/>
        <end position="5810"/>
    </location>
</feature>
<feature type="coiled-coil region" evidence="1">
    <location>
        <begin position="5900"/>
        <end position="6022"/>
    </location>
</feature>
<feature type="coiled-coil region" evidence="1">
    <location>
        <begin position="6719"/>
        <end position="6743"/>
    </location>
</feature>
<feature type="coiled-coil region" evidence="1">
    <location>
        <begin position="7601"/>
        <end position="7637"/>
    </location>
</feature>
<feature type="coiled-coil region" evidence="1">
    <location>
        <begin position="7710"/>
        <end position="7813"/>
    </location>
</feature>
<feature type="coiled-coil region" evidence="1">
    <location>
        <begin position="7934"/>
        <end position="7961"/>
    </location>
</feature>
<feature type="coiled-coil region" evidence="1">
    <location>
        <begin position="8217"/>
        <end position="8241"/>
    </location>
</feature>
<feature type="coiled-coil region" evidence="1">
    <location>
        <begin position="8644"/>
        <end position="8697"/>
    </location>
</feature>
<feature type="coiled-coil region" evidence="1">
    <location>
        <begin position="8882"/>
        <end position="8907"/>
    </location>
</feature>
<feature type="coiled-coil region" evidence="1">
    <location>
        <begin position="9219"/>
        <end position="9247"/>
    </location>
</feature>
<feature type="compositionally biased region" description="Polar residues" evidence="3">
    <location>
        <begin position="169"/>
        <end position="179"/>
    </location>
</feature>
<feature type="compositionally biased region" description="Low complexity" evidence="3">
    <location>
        <begin position="193"/>
        <end position="205"/>
    </location>
</feature>
<feature type="compositionally biased region" description="Basic and acidic residues" evidence="3">
    <location>
        <begin position="270"/>
        <end position="282"/>
    </location>
</feature>
<feature type="compositionally biased region" description="Low complexity" evidence="3">
    <location>
        <begin position="285"/>
        <end position="320"/>
    </location>
</feature>
<feature type="compositionally biased region" description="Polar residues" evidence="3">
    <location>
        <begin position="328"/>
        <end position="338"/>
    </location>
</feature>
<feature type="compositionally biased region" description="Basic and acidic residues" evidence="3">
    <location>
        <begin position="342"/>
        <end position="365"/>
    </location>
</feature>
<feature type="compositionally biased region" description="Acidic residues" evidence="3">
    <location>
        <begin position="366"/>
        <end position="375"/>
    </location>
</feature>
<feature type="compositionally biased region" description="Polar residues" evidence="3">
    <location>
        <begin position="376"/>
        <end position="389"/>
    </location>
</feature>
<feature type="compositionally biased region" description="Polar residues" evidence="3">
    <location>
        <begin position="421"/>
        <end position="437"/>
    </location>
</feature>
<feature type="compositionally biased region" description="Basic residues" evidence="3">
    <location>
        <begin position="441"/>
        <end position="451"/>
    </location>
</feature>
<feature type="compositionally biased region" description="Low complexity" evidence="3">
    <location>
        <begin position="460"/>
        <end position="471"/>
    </location>
</feature>
<feature type="compositionally biased region" description="Basic and acidic residues" evidence="3">
    <location>
        <begin position="1025"/>
        <end position="1037"/>
    </location>
</feature>
<feature type="compositionally biased region" description="Low complexity" evidence="3">
    <location>
        <begin position="1047"/>
        <end position="1057"/>
    </location>
</feature>
<feature type="compositionally biased region" description="Basic and acidic residues" evidence="3">
    <location>
        <begin position="1058"/>
        <end position="1132"/>
    </location>
</feature>
<feature type="compositionally biased region" description="Acidic residues" evidence="3">
    <location>
        <begin position="1133"/>
        <end position="1165"/>
    </location>
</feature>
<feature type="compositionally biased region" description="Basic and acidic residues" evidence="3">
    <location>
        <begin position="1658"/>
        <end position="1680"/>
    </location>
</feature>
<feature type="compositionally biased region" description="Basic and acidic residues" evidence="3">
    <location>
        <begin position="1973"/>
        <end position="1995"/>
    </location>
</feature>
<feature type="compositionally biased region" description="Acidic residues" evidence="3">
    <location>
        <begin position="2216"/>
        <end position="2228"/>
    </location>
</feature>
<feature type="compositionally biased region" description="Basic and acidic residues" evidence="3">
    <location>
        <begin position="2235"/>
        <end position="2245"/>
    </location>
</feature>
<feature type="compositionally biased region" description="Low complexity" evidence="3">
    <location>
        <begin position="2475"/>
        <end position="2484"/>
    </location>
</feature>
<feature type="compositionally biased region" description="Basic and acidic residues" evidence="3">
    <location>
        <begin position="2487"/>
        <end position="2496"/>
    </location>
</feature>
<feature type="compositionally biased region" description="Basic and acidic residues" evidence="3">
    <location>
        <begin position="2505"/>
        <end position="2527"/>
    </location>
</feature>
<feature type="compositionally biased region" description="Low complexity" evidence="3">
    <location>
        <begin position="2552"/>
        <end position="2564"/>
    </location>
</feature>
<feature type="compositionally biased region" description="Low complexity" evidence="3">
    <location>
        <begin position="3121"/>
        <end position="3133"/>
    </location>
</feature>
<feature type="compositionally biased region" description="Basic and acidic residues" evidence="3">
    <location>
        <begin position="3809"/>
        <end position="3822"/>
    </location>
</feature>
<feature type="compositionally biased region" description="Low complexity" evidence="3">
    <location>
        <begin position="3851"/>
        <end position="3890"/>
    </location>
</feature>
<feature type="compositionally biased region" description="Polar residues" evidence="3">
    <location>
        <begin position="3926"/>
        <end position="3941"/>
    </location>
</feature>
<feature type="compositionally biased region" description="Basic and acidic residues" evidence="3">
    <location>
        <begin position="3942"/>
        <end position="3953"/>
    </location>
</feature>
<feature type="compositionally biased region" description="Basic and acidic residues" evidence="3">
    <location>
        <begin position="4039"/>
        <end position="4065"/>
    </location>
</feature>
<feature type="compositionally biased region" description="Low complexity" evidence="3">
    <location>
        <begin position="4157"/>
        <end position="4178"/>
    </location>
</feature>
<feature type="compositionally biased region" description="Low complexity" evidence="3">
    <location>
        <begin position="4929"/>
        <end position="4943"/>
    </location>
</feature>
<feature type="compositionally biased region" description="Low complexity" evidence="3">
    <location>
        <begin position="5004"/>
        <end position="5019"/>
    </location>
</feature>
<feature type="compositionally biased region" description="Low complexity" evidence="3">
    <location>
        <begin position="5185"/>
        <end position="5202"/>
    </location>
</feature>
<feature type="compositionally biased region" description="Basic and acidic residues" evidence="3">
    <location>
        <begin position="5716"/>
        <end position="5732"/>
    </location>
</feature>
<feature type="compositionally biased region" description="Basic and acidic residues" evidence="3">
    <location>
        <begin position="5738"/>
        <end position="5811"/>
    </location>
</feature>
<feature type="compositionally biased region" description="Basic and acidic residues" evidence="3">
    <location>
        <begin position="5909"/>
        <end position="5953"/>
    </location>
</feature>
<feature type="compositionally biased region" description="Low complexity" evidence="3">
    <location>
        <begin position="5954"/>
        <end position="5968"/>
    </location>
</feature>
<feature type="compositionally biased region" description="Acidic residues" evidence="3">
    <location>
        <begin position="5969"/>
        <end position="5978"/>
    </location>
</feature>
<feature type="compositionally biased region" description="Basic and acidic residues" evidence="3">
    <location>
        <begin position="5991"/>
        <end position="6003"/>
    </location>
</feature>
<feature type="compositionally biased region" description="Polar residues" evidence="3">
    <location>
        <begin position="6129"/>
        <end position="6138"/>
    </location>
</feature>
<feature type="compositionally biased region" description="Low complexity" evidence="3">
    <location>
        <begin position="6314"/>
        <end position="6333"/>
    </location>
</feature>
<feature type="compositionally biased region" description="Low complexity" evidence="3">
    <location>
        <begin position="6722"/>
        <end position="6759"/>
    </location>
</feature>
<feature type="compositionally biased region" description="Basic and acidic residues" evidence="3">
    <location>
        <begin position="7585"/>
        <end position="7599"/>
    </location>
</feature>
<feature type="compositionally biased region" description="Acidic residues" evidence="3">
    <location>
        <begin position="7600"/>
        <end position="7685"/>
    </location>
</feature>
<feature type="compositionally biased region" description="Basic residues" evidence="3">
    <location>
        <begin position="7749"/>
        <end position="7765"/>
    </location>
</feature>
<feature type="compositionally biased region" description="Basic and acidic residues" evidence="3">
    <location>
        <begin position="7766"/>
        <end position="7786"/>
    </location>
</feature>
<feature type="compositionally biased region" description="Basic and acidic residues" evidence="3">
    <location>
        <begin position="8218"/>
        <end position="8242"/>
    </location>
</feature>
<feature type="compositionally biased region" description="Acidic residues" evidence="3">
    <location>
        <begin position="8243"/>
        <end position="8252"/>
    </location>
</feature>
<feature type="compositionally biased region" description="Basic and acidic residues" evidence="3">
    <location>
        <begin position="8305"/>
        <end position="8314"/>
    </location>
</feature>
<feature type="compositionally biased region" description="Acidic residues" evidence="3">
    <location>
        <begin position="8315"/>
        <end position="8363"/>
    </location>
</feature>
<feature type="compositionally biased region" description="Basic and acidic residues" evidence="3">
    <location>
        <begin position="8364"/>
        <end position="8374"/>
    </location>
</feature>
<feature type="compositionally biased region" description="Low complexity" evidence="3">
    <location>
        <begin position="8478"/>
        <end position="8492"/>
    </location>
</feature>
<feature type="compositionally biased region" description="Low complexity" evidence="3">
    <location>
        <begin position="9764"/>
        <end position="9779"/>
    </location>
</feature>
<feature type="compositionally biased region" description="Low complexity" evidence="3">
    <location>
        <begin position="9899"/>
        <end position="9926"/>
    </location>
</feature>
<feature type="compositionally biased region" description="Low complexity" evidence="3">
    <location>
        <begin position="9986"/>
        <end position="10022"/>
    </location>
</feature>
<feature type="compositionally biased region" description="Polar residues" evidence="3">
    <location>
        <begin position="10031"/>
        <end position="10041"/>
    </location>
</feature>
<feature type="compositionally biased region" description="Low complexity" evidence="3">
    <location>
        <begin position="10042"/>
        <end position="10061"/>
    </location>
</feature>
<name>MLRR1_PLAF7</name>
<dbReference type="EMBL" id="AL844504">
    <property type="protein sequence ID" value="CAD51479.1"/>
    <property type="molecule type" value="Genomic_DNA"/>
</dbReference>
<dbReference type="RefSeq" id="XP_001351672.1">
    <property type="nucleotide sequence ID" value="XM_001351636.1"/>
</dbReference>
<dbReference type="BioGRID" id="1208256">
    <property type="interactions" value="13"/>
</dbReference>
<dbReference type="FunCoup" id="Q8I3Z1">
    <property type="interactions" value="293"/>
</dbReference>
<dbReference type="IntAct" id="Q8I3Z1">
    <property type="interactions" value="10"/>
</dbReference>
<dbReference type="STRING" id="36329.Q8I3Z1"/>
<dbReference type="PaxDb" id="5833-PFE0570w"/>
<dbReference type="EnsemblProtists" id="CAD51479">
    <property type="protein sequence ID" value="CAD51479"/>
    <property type="gene ID" value="PF3D7_0511500"/>
</dbReference>
<dbReference type="KEGG" id="pfa:PF3D7_0511500"/>
<dbReference type="VEuPathDB" id="PlasmoDB:PF3D7_0511500"/>
<dbReference type="HOGENOM" id="CLU_000013_0_0_1"/>
<dbReference type="InParanoid" id="Q8I3Z1"/>
<dbReference type="OMA" id="IQTHEYN"/>
<dbReference type="OrthoDB" id="428753at2759"/>
<dbReference type="PhylomeDB" id="Q8I3Z1"/>
<dbReference type="Proteomes" id="UP000001450">
    <property type="component" value="Chromosome 5"/>
</dbReference>
<dbReference type="GO" id="GO:0016020">
    <property type="term" value="C:membrane"/>
    <property type="evidence" value="ECO:0007669"/>
    <property type="project" value="UniProtKB-SubCell"/>
</dbReference>
<dbReference type="GO" id="GO:0009982">
    <property type="term" value="F:pseudouridine synthase activity"/>
    <property type="evidence" value="ECO:0007669"/>
    <property type="project" value="InterPro"/>
</dbReference>
<dbReference type="GO" id="GO:0003723">
    <property type="term" value="F:RNA binding"/>
    <property type="evidence" value="ECO:0007669"/>
    <property type="project" value="InterPro"/>
</dbReference>
<dbReference type="GO" id="GO:0001522">
    <property type="term" value="P:pseudouridine synthesis"/>
    <property type="evidence" value="ECO:0007669"/>
    <property type="project" value="InterPro"/>
</dbReference>
<dbReference type="CDD" id="cd00121">
    <property type="entry name" value="MATH"/>
    <property type="match status" value="1"/>
</dbReference>
<dbReference type="Gene3D" id="3.30.2350.10">
    <property type="entry name" value="Pseudouridine synthase"/>
    <property type="match status" value="2"/>
</dbReference>
<dbReference type="InterPro" id="IPR016024">
    <property type="entry name" value="ARM-type_fold"/>
</dbReference>
<dbReference type="InterPro" id="IPR002083">
    <property type="entry name" value="MATH/TRAF_dom"/>
</dbReference>
<dbReference type="InterPro" id="IPR020103">
    <property type="entry name" value="PsdUridine_synth_cat_dom_sf"/>
</dbReference>
<dbReference type="InterPro" id="IPR052503">
    <property type="entry name" value="S100-fused_Epidermal_Struct"/>
</dbReference>
<dbReference type="PANTHER" id="PTHR22571:SF51">
    <property type="entry name" value="FILAGGRIN"/>
    <property type="match status" value="1"/>
</dbReference>
<dbReference type="PANTHER" id="PTHR22571">
    <property type="entry name" value="FILAGGRIN-RELATED"/>
    <property type="match status" value="1"/>
</dbReference>
<dbReference type="SUPFAM" id="SSF48371">
    <property type="entry name" value="ARM repeat"/>
    <property type="match status" value="1"/>
</dbReference>
<dbReference type="SUPFAM" id="SSF55120">
    <property type="entry name" value="Pseudouridine synthase"/>
    <property type="match status" value="2"/>
</dbReference>
<dbReference type="SUPFAM" id="SSF49599">
    <property type="entry name" value="TRAF domain-like"/>
    <property type="match status" value="1"/>
</dbReference>
<dbReference type="PROSITE" id="PS50144">
    <property type="entry name" value="MATH"/>
    <property type="match status" value="1"/>
</dbReference>
<proteinExistence type="evidence at protein level"/>